<dbReference type="EMBL" id="CP000477">
    <property type="protein sequence ID" value="ABK13952.1"/>
    <property type="molecule type" value="Genomic_DNA"/>
</dbReference>
<dbReference type="RefSeq" id="WP_011695351.1">
    <property type="nucleotide sequence ID" value="NC_008553.1"/>
</dbReference>
<dbReference type="SMR" id="A0B5H8"/>
<dbReference type="STRING" id="349307.Mthe_0152"/>
<dbReference type="GeneID" id="4462826"/>
<dbReference type="KEGG" id="mtp:Mthe_0152"/>
<dbReference type="HOGENOM" id="CLU_060161_4_3_2"/>
<dbReference type="OrthoDB" id="350539at2157"/>
<dbReference type="Proteomes" id="UP000000674">
    <property type="component" value="Chromosome"/>
</dbReference>
<dbReference type="GO" id="GO:0003677">
    <property type="term" value="F:DNA binding"/>
    <property type="evidence" value="ECO:0007669"/>
    <property type="project" value="UniProtKB-KW"/>
</dbReference>
<dbReference type="GO" id="GO:0003700">
    <property type="term" value="F:DNA-binding transcription factor activity"/>
    <property type="evidence" value="ECO:0007669"/>
    <property type="project" value="UniProtKB-UniRule"/>
</dbReference>
<dbReference type="GO" id="GO:0006352">
    <property type="term" value="P:DNA-templated transcription initiation"/>
    <property type="evidence" value="ECO:0007669"/>
    <property type="project" value="InterPro"/>
</dbReference>
<dbReference type="CDD" id="cd04518">
    <property type="entry name" value="TBP_archaea"/>
    <property type="match status" value="1"/>
</dbReference>
<dbReference type="FunFam" id="3.30.310.10:FF:000007">
    <property type="entry name" value="TATA-box-binding protein"/>
    <property type="match status" value="1"/>
</dbReference>
<dbReference type="Gene3D" id="3.30.310.10">
    <property type="entry name" value="TATA-Binding Protein"/>
    <property type="match status" value="2"/>
</dbReference>
<dbReference type="HAMAP" id="MF_00408">
    <property type="entry name" value="TATA_bind_prot_arch"/>
    <property type="match status" value="1"/>
</dbReference>
<dbReference type="InterPro" id="IPR000814">
    <property type="entry name" value="TBP"/>
</dbReference>
<dbReference type="InterPro" id="IPR033711">
    <property type="entry name" value="TBP_archaea"/>
</dbReference>
<dbReference type="InterPro" id="IPR030491">
    <property type="entry name" value="TBP_CS"/>
</dbReference>
<dbReference type="InterPro" id="IPR012295">
    <property type="entry name" value="TBP_dom_sf"/>
</dbReference>
<dbReference type="NCBIfam" id="NF001593">
    <property type="entry name" value="PRK00394.1-2"/>
    <property type="match status" value="1"/>
</dbReference>
<dbReference type="NCBIfam" id="NF001597">
    <property type="entry name" value="PRK00394.2-2"/>
    <property type="match status" value="1"/>
</dbReference>
<dbReference type="NCBIfam" id="NF001599">
    <property type="entry name" value="PRK00394.2-4"/>
    <property type="match status" value="1"/>
</dbReference>
<dbReference type="PANTHER" id="PTHR10126">
    <property type="entry name" value="TATA-BOX BINDING PROTEIN"/>
    <property type="match status" value="1"/>
</dbReference>
<dbReference type="Pfam" id="PF00352">
    <property type="entry name" value="TBP"/>
    <property type="match status" value="2"/>
</dbReference>
<dbReference type="PRINTS" id="PR00686">
    <property type="entry name" value="TIFACTORIID"/>
</dbReference>
<dbReference type="SUPFAM" id="SSF55945">
    <property type="entry name" value="TATA-box binding protein-like"/>
    <property type="match status" value="2"/>
</dbReference>
<dbReference type="PROSITE" id="PS00351">
    <property type="entry name" value="TFIID"/>
    <property type="match status" value="1"/>
</dbReference>
<comment type="function">
    <text evidence="1">General factor that plays a role in the activation of archaeal genes transcribed by RNA polymerase. Binds specifically to the TATA box promoter element which lies close to the position of transcription initiation.</text>
</comment>
<comment type="similarity">
    <text evidence="1">Belongs to the TBP family.</text>
</comment>
<name>TBP_METTP</name>
<gene>
    <name evidence="1" type="primary">tbp</name>
    <name type="ordered locus">Mthe_0152</name>
</gene>
<sequence length="183" mass="20135">MESTINIENVVASTKLADEFDLVKIESELEGAEYNKEKFPGLVYRVKSPKAAFLIFTSGKVVCTGAKNVEDVRTVITNMARTLKSIGFDNINLEPEIHVQNIVASADLKTDLNLNAIALGLGLENIEYEPEQFPGLVYRIKQPKVVVLIFSSGKLVVTGGKSPEECEEGVRIVRQQLENLGLL</sequence>
<accession>A0B5H8</accession>
<keyword id="KW-0238">DNA-binding</keyword>
<keyword id="KW-1185">Reference proteome</keyword>
<keyword id="KW-0677">Repeat</keyword>
<keyword id="KW-0804">Transcription</keyword>
<keyword id="KW-0805">Transcription regulation</keyword>
<proteinExistence type="inferred from homology"/>
<reference key="1">
    <citation type="submission" date="2006-10" db="EMBL/GenBank/DDBJ databases">
        <title>Complete sequence of Methanosaeta thermophila PT.</title>
        <authorList>
            <consortium name="US DOE Joint Genome Institute"/>
            <person name="Copeland A."/>
            <person name="Lucas S."/>
            <person name="Lapidus A."/>
            <person name="Barry K."/>
            <person name="Detter J.C."/>
            <person name="Glavina del Rio T."/>
            <person name="Hammon N."/>
            <person name="Israni S."/>
            <person name="Pitluck S."/>
            <person name="Chain P."/>
            <person name="Malfatti S."/>
            <person name="Shin M."/>
            <person name="Vergez L."/>
            <person name="Schmutz J."/>
            <person name="Larimer F."/>
            <person name="Land M."/>
            <person name="Hauser L."/>
            <person name="Kyrpides N."/>
            <person name="Kim E."/>
            <person name="Smith K.S."/>
            <person name="Ingram-Smith C."/>
            <person name="Richardson P."/>
        </authorList>
    </citation>
    <scope>NUCLEOTIDE SEQUENCE [LARGE SCALE GENOMIC DNA]</scope>
    <source>
        <strain>DSM 6194 / JCM 14653 / NBRC 101360 / PT</strain>
    </source>
</reference>
<evidence type="ECO:0000255" key="1">
    <source>
        <dbReference type="HAMAP-Rule" id="MF_00408"/>
    </source>
</evidence>
<feature type="chain" id="PRO_1000049883" description="TATA-box-binding protein">
    <location>
        <begin position="1"/>
        <end position="183"/>
    </location>
</feature>
<feature type="repeat" description="1">
    <location>
        <begin position="7"/>
        <end position="83"/>
    </location>
</feature>
<feature type="repeat" description="2">
    <location>
        <begin position="99"/>
        <end position="177"/>
    </location>
</feature>
<protein>
    <recommendedName>
        <fullName evidence="1">TATA-box-binding protein</fullName>
    </recommendedName>
    <alternativeName>
        <fullName evidence="1">Box A-binding protein</fullName>
        <shortName evidence="1">BAP</shortName>
    </alternativeName>
    <alternativeName>
        <fullName evidence="1">TATA sequence-binding protein</fullName>
        <shortName evidence="1">TBP</shortName>
    </alternativeName>
    <alternativeName>
        <fullName evidence="1">TATA-box factor</fullName>
    </alternativeName>
</protein>
<organism>
    <name type="scientific">Methanothrix thermoacetophila (strain DSM 6194 / JCM 14653 / NBRC 101360 / PT)</name>
    <name type="common">Methanosaeta thermophila</name>
    <dbReference type="NCBI Taxonomy" id="349307"/>
    <lineage>
        <taxon>Archaea</taxon>
        <taxon>Methanobacteriati</taxon>
        <taxon>Methanobacteriota</taxon>
        <taxon>Stenosarchaea group</taxon>
        <taxon>Methanomicrobia</taxon>
        <taxon>Methanotrichales</taxon>
        <taxon>Methanotrichaceae</taxon>
        <taxon>Methanothrix</taxon>
    </lineage>
</organism>